<keyword id="KW-0067">ATP-binding</keyword>
<keyword id="KW-0963">Cytoplasm</keyword>
<keyword id="KW-0333">Golgi apparatus</keyword>
<keyword id="KW-0418">Kinase</keyword>
<keyword id="KW-0460">Magnesium</keyword>
<keyword id="KW-0479">Metal-binding</keyword>
<keyword id="KW-0547">Nucleotide-binding</keyword>
<keyword id="KW-0597">Phosphoprotein</keyword>
<keyword id="KW-1185">Reference proteome</keyword>
<keyword id="KW-0723">Serine/threonine-protein kinase</keyword>
<keyword id="KW-0808">Transferase</keyword>
<evidence type="ECO:0000250" key="1"/>
<evidence type="ECO:0000250" key="2">
    <source>
        <dbReference type="UniProtKB" id="O00506"/>
    </source>
</evidence>
<evidence type="ECO:0000255" key="3">
    <source>
        <dbReference type="PROSITE-ProRule" id="PRU00159"/>
    </source>
</evidence>
<evidence type="ECO:0000256" key="4">
    <source>
        <dbReference type="SAM" id="MobiDB-lite"/>
    </source>
</evidence>
<evidence type="ECO:0000305" key="5"/>
<evidence type="ECO:0007744" key="6">
    <source>
    </source>
</evidence>
<protein>
    <recommendedName>
        <fullName>Serine/threonine-protein kinase 25</fullName>
        <ecNumber>2.7.11.1</ecNumber>
    </recommendedName>
    <alternativeName>
        <fullName>Ste20-like kinase</fullName>
    </alternativeName>
    <alternativeName>
        <fullName>Sterile 20/oxidant stress-response kinase 1</fullName>
        <shortName>SOK-1</shortName>
        <shortName>Ste20/oxidant stress response kinase 1</shortName>
    </alternativeName>
</protein>
<comment type="function">
    <text evidence="2">Oxidant stress-activated serine/threonine kinase that may play a role in the response to environmental stress. Targets to the Golgi apparatus where it appears to regulate protein transport events, cell adhesion, and polarity complexes important for cell migration. Part of the striatin-interacting phosphatase and kinase (STRIPAK) complexes. STRIPAK complexes have critical roles in protein (de)phosphorylation and are regulators of multiple signaling pathways including Hippo, MAPK, nuclear receptor and cytoskeleton remodeling. Different types of STRIPAK complexes are involved in a variety of biological processes such as cell growth, differentiation, apoptosis, metabolism and immune regulation.</text>
</comment>
<comment type="catalytic activity">
    <reaction>
        <text>L-seryl-[protein] + ATP = O-phospho-L-seryl-[protein] + ADP + H(+)</text>
        <dbReference type="Rhea" id="RHEA:17989"/>
        <dbReference type="Rhea" id="RHEA-COMP:9863"/>
        <dbReference type="Rhea" id="RHEA-COMP:11604"/>
        <dbReference type="ChEBI" id="CHEBI:15378"/>
        <dbReference type="ChEBI" id="CHEBI:29999"/>
        <dbReference type="ChEBI" id="CHEBI:30616"/>
        <dbReference type="ChEBI" id="CHEBI:83421"/>
        <dbReference type="ChEBI" id="CHEBI:456216"/>
        <dbReference type="EC" id="2.7.11.1"/>
    </reaction>
</comment>
<comment type="catalytic activity">
    <reaction>
        <text>L-threonyl-[protein] + ATP = O-phospho-L-threonyl-[protein] + ADP + H(+)</text>
        <dbReference type="Rhea" id="RHEA:46608"/>
        <dbReference type="Rhea" id="RHEA-COMP:11060"/>
        <dbReference type="Rhea" id="RHEA-COMP:11605"/>
        <dbReference type="ChEBI" id="CHEBI:15378"/>
        <dbReference type="ChEBI" id="CHEBI:30013"/>
        <dbReference type="ChEBI" id="CHEBI:30616"/>
        <dbReference type="ChEBI" id="CHEBI:61977"/>
        <dbReference type="ChEBI" id="CHEBI:456216"/>
        <dbReference type="EC" id="2.7.11.1"/>
    </reaction>
</comment>
<comment type="cofactor">
    <cofactor evidence="1">
        <name>Mg(2+)</name>
        <dbReference type="ChEBI" id="CHEBI:18420"/>
    </cofactor>
</comment>
<comment type="activity regulation">
    <text evidence="1">Interaction with Golgi matrix protein GOLGA2 leads to autophosphorylation on Thr-174, possibly as a consequence of stabilization of dimer formation. The C-terminal non-catalytic region inhibits the kinase activity (By similarity).</text>
</comment>
<comment type="subunit">
    <text evidence="2">Homodimer. Interacts with CTTNBP2NL. Part of the core of STRIPAK complexes composed of PP2A catalytic and scaffolding subunits, the striatins (PP2A regulatory subunits), the striatin-associated proteins MOB4, STRIP1 and STRIP2, PDCD10 and members of the STE20 kinases, such as STK24 and STK26. Interacts with TAOK3 (via N-terminus); the interaction promotes STK25 abundance at the level of protein expression and/or stability.</text>
</comment>
<comment type="subcellular location">
    <subcellularLocation>
        <location evidence="1">Cytoplasm</location>
    </subcellularLocation>
    <subcellularLocation>
        <location evidence="1">Golgi apparatus</location>
    </subcellularLocation>
    <text evidence="1">Localizes to the Golgi apparatus.</text>
</comment>
<comment type="similarity">
    <text evidence="5">Belongs to the protein kinase superfamily. STE Ser/Thr protein kinase family. STE20 subfamily.</text>
</comment>
<feature type="chain" id="PRO_0000086714" description="Serine/threonine-protein kinase 25">
    <location>
        <begin position="1"/>
        <end position="426"/>
    </location>
</feature>
<feature type="domain" description="Protein kinase" evidence="3">
    <location>
        <begin position="20"/>
        <end position="270"/>
    </location>
</feature>
<feature type="region of interest" description="Disordered" evidence="4">
    <location>
        <begin position="291"/>
        <end position="354"/>
    </location>
</feature>
<feature type="compositionally biased region" description="Acidic residues" evidence="4">
    <location>
        <begin position="299"/>
        <end position="314"/>
    </location>
</feature>
<feature type="active site" description="Proton acceptor" evidence="3">
    <location>
        <position position="140"/>
    </location>
</feature>
<feature type="binding site" evidence="3">
    <location>
        <begin position="26"/>
        <end position="34"/>
    </location>
    <ligand>
        <name>ATP</name>
        <dbReference type="ChEBI" id="CHEBI:30616"/>
    </ligand>
</feature>
<feature type="binding site" evidence="3">
    <location>
        <position position="49"/>
    </location>
    <ligand>
        <name>ATP</name>
        <dbReference type="ChEBI" id="CHEBI:30616"/>
    </ligand>
</feature>
<feature type="modified residue" description="Phosphothreonine; by autocatalysis" evidence="2">
    <location>
        <position position="174"/>
    </location>
</feature>
<feature type="modified residue" description="Phosphoserine" evidence="6">
    <location>
        <position position="278"/>
    </location>
</feature>
<feature type="sequence conflict" description="In Ref. 1; AAD01208." evidence="5" ref="1">
    <original>L</original>
    <variation>M</variation>
    <location>
        <position position="156"/>
    </location>
</feature>
<organism>
    <name type="scientific">Mus musculus</name>
    <name type="common">Mouse</name>
    <dbReference type="NCBI Taxonomy" id="10090"/>
    <lineage>
        <taxon>Eukaryota</taxon>
        <taxon>Metazoa</taxon>
        <taxon>Chordata</taxon>
        <taxon>Craniata</taxon>
        <taxon>Vertebrata</taxon>
        <taxon>Euteleostomi</taxon>
        <taxon>Mammalia</taxon>
        <taxon>Eutheria</taxon>
        <taxon>Euarchontoglires</taxon>
        <taxon>Glires</taxon>
        <taxon>Rodentia</taxon>
        <taxon>Myomorpha</taxon>
        <taxon>Muroidea</taxon>
        <taxon>Muridae</taxon>
        <taxon>Murinae</taxon>
        <taxon>Mus</taxon>
        <taxon>Mus</taxon>
    </lineage>
</organism>
<name>STK25_MOUSE</name>
<gene>
    <name type="primary">Stk25</name>
    <name type="synonym">Sok1</name>
</gene>
<accession>Q9Z2W1</accession>
<accession>Q6IR17</accession>
<proteinExistence type="evidence at protein level"/>
<reference key="1">
    <citation type="submission" date="1997-05" db="EMBL/GenBank/DDBJ databases">
        <title>Genetic mapping of human and mouse PAK genes.</title>
        <authorList>
            <person name="Melnick M.B."/>
        </authorList>
    </citation>
    <scope>NUCLEOTIDE SEQUENCE [MRNA]</scope>
    <source>
        <strain>C57BL/6J</strain>
    </source>
</reference>
<reference key="2">
    <citation type="journal article" date="2005" name="Science">
        <title>The transcriptional landscape of the mammalian genome.</title>
        <authorList>
            <person name="Carninci P."/>
            <person name="Kasukawa T."/>
            <person name="Katayama S."/>
            <person name="Gough J."/>
            <person name="Frith M.C."/>
            <person name="Maeda N."/>
            <person name="Oyama R."/>
            <person name="Ravasi T."/>
            <person name="Lenhard B."/>
            <person name="Wells C."/>
            <person name="Kodzius R."/>
            <person name="Shimokawa K."/>
            <person name="Bajic V.B."/>
            <person name="Brenner S.E."/>
            <person name="Batalov S."/>
            <person name="Forrest A.R."/>
            <person name="Zavolan M."/>
            <person name="Davis M.J."/>
            <person name="Wilming L.G."/>
            <person name="Aidinis V."/>
            <person name="Allen J.E."/>
            <person name="Ambesi-Impiombato A."/>
            <person name="Apweiler R."/>
            <person name="Aturaliya R.N."/>
            <person name="Bailey T.L."/>
            <person name="Bansal M."/>
            <person name="Baxter L."/>
            <person name="Beisel K.W."/>
            <person name="Bersano T."/>
            <person name="Bono H."/>
            <person name="Chalk A.M."/>
            <person name="Chiu K.P."/>
            <person name="Choudhary V."/>
            <person name="Christoffels A."/>
            <person name="Clutterbuck D.R."/>
            <person name="Crowe M.L."/>
            <person name="Dalla E."/>
            <person name="Dalrymple B.P."/>
            <person name="de Bono B."/>
            <person name="Della Gatta G."/>
            <person name="di Bernardo D."/>
            <person name="Down T."/>
            <person name="Engstrom P."/>
            <person name="Fagiolini M."/>
            <person name="Faulkner G."/>
            <person name="Fletcher C.F."/>
            <person name="Fukushima T."/>
            <person name="Furuno M."/>
            <person name="Futaki S."/>
            <person name="Gariboldi M."/>
            <person name="Georgii-Hemming P."/>
            <person name="Gingeras T.R."/>
            <person name="Gojobori T."/>
            <person name="Green R.E."/>
            <person name="Gustincich S."/>
            <person name="Harbers M."/>
            <person name="Hayashi Y."/>
            <person name="Hensch T.K."/>
            <person name="Hirokawa N."/>
            <person name="Hill D."/>
            <person name="Huminiecki L."/>
            <person name="Iacono M."/>
            <person name="Ikeo K."/>
            <person name="Iwama A."/>
            <person name="Ishikawa T."/>
            <person name="Jakt M."/>
            <person name="Kanapin A."/>
            <person name="Katoh M."/>
            <person name="Kawasawa Y."/>
            <person name="Kelso J."/>
            <person name="Kitamura H."/>
            <person name="Kitano H."/>
            <person name="Kollias G."/>
            <person name="Krishnan S.P."/>
            <person name="Kruger A."/>
            <person name="Kummerfeld S.K."/>
            <person name="Kurochkin I.V."/>
            <person name="Lareau L.F."/>
            <person name="Lazarevic D."/>
            <person name="Lipovich L."/>
            <person name="Liu J."/>
            <person name="Liuni S."/>
            <person name="McWilliam S."/>
            <person name="Madan Babu M."/>
            <person name="Madera M."/>
            <person name="Marchionni L."/>
            <person name="Matsuda H."/>
            <person name="Matsuzawa S."/>
            <person name="Miki H."/>
            <person name="Mignone F."/>
            <person name="Miyake S."/>
            <person name="Morris K."/>
            <person name="Mottagui-Tabar S."/>
            <person name="Mulder N."/>
            <person name="Nakano N."/>
            <person name="Nakauchi H."/>
            <person name="Ng P."/>
            <person name="Nilsson R."/>
            <person name="Nishiguchi S."/>
            <person name="Nishikawa S."/>
            <person name="Nori F."/>
            <person name="Ohara O."/>
            <person name="Okazaki Y."/>
            <person name="Orlando V."/>
            <person name="Pang K.C."/>
            <person name="Pavan W.J."/>
            <person name="Pavesi G."/>
            <person name="Pesole G."/>
            <person name="Petrovsky N."/>
            <person name="Piazza S."/>
            <person name="Reed J."/>
            <person name="Reid J.F."/>
            <person name="Ring B.Z."/>
            <person name="Ringwald M."/>
            <person name="Rost B."/>
            <person name="Ruan Y."/>
            <person name="Salzberg S.L."/>
            <person name="Sandelin A."/>
            <person name="Schneider C."/>
            <person name="Schoenbach C."/>
            <person name="Sekiguchi K."/>
            <person name="Semple C.A."/>
            <person name="Seno S."/>
            <person name="Sessa L."/>
            <person name="Sheng Y."/>
            <person name="Shibata Y."/>
            <person name="Shimada H."/>
            <person name="Shimada K."/>
            <person name="Silva D."/>
            <person name="Sinclair B."/>
            <person name="Sperling S."/>
            <person name="Stupka E."/>
            <person name="Sugiura K."/>
            <person name="Sultana R."/>
            <person name="Takenaka Y."/>
            <person name="Taki K."/>
            <person name="Tammoja K."/>
            <person name="Tan S.L."/>
            <person name="Tang S."/>
            <person name="Taylor M.S."/>
            <person name="Tegner J."/>
            <person name="Teichmann S.A."/>
            <person name="Ueda H.R."/>
            <person name="van Nimwegen E."/>
            <person name="Verardo R."/>
            <person name="Wei C.L."/>
            <person name="Yagi K."/>
            <person name="Yamanishi H."/>
            <person name="Zabarovsky E."/>
            <person name="Zhu S."/>
            <person name="Zimmer A."/>
            <person name="Hide W."/>
            <person name="Bult C."/>
            <person name="Grimmond S.M."/>
            <person name="Teasdale R.D."/>
            <person name="Liu E.T."/>
            <person name="Brusic V."/>
            <person name="Quackenbush J."/>
            <person name="Wahlestedt C."/>
            <person name="Mattick J.S."/>
            <person name="Hume D.A."/>
            <person name="Kai C."/>
            <person name="Sasaki D."/>
            <person name="Tomaru Y."/>
            <person name="Fukuda S."/>
            <person name="Kanamori-Katayama M."/>
            <person name="Suzuki M."/>
            <person name="Aoki J."/>
            <person name="Arakawa T."/>
            <person name="Iida J."/>
            <person name="Imamura K."/>
            <person name="Itoh M."/>
            <person name="Kato T."/>
            <person name="Kawaji H."/>
            <person name="Kawagashira N."/>
            <person name="Kawashima T."/>
            <person name="Kojima M."/>
            <person name="Kondo S."/>
            <person name="Konno H."/>
            <person name="Nakano K."/>
            <person name="Ninomiya N."/>
            <person name="Nishio T."/>
            <person name="Okada M."/>
            <person name="Plessy C."/>
            <person name="Shibata K."/>
            <person name="Shiraki T."/>
            <person name="Suzuki S."/>
            <person name="Tagami M."/>
            <person name="Waki K."/>
            <person name="Watahiki A."/>
            <person name="Okamura-Oho Y."/>
            <person name="Suzuki H."/>
            <person name="Kawai J."/>
            <person name="Hayashizaki Y."/>
        </authorList>
    </citation>
    <scope>NUCLEOTIDE SEQUENCE [LARGE SCALE MRNA]</scope>
    <source>
        <strain>C57BL/6J</strain>
    </source>
</reference>
<reference key="3">
    <citation type="submission" date="2005-09" db="EMBL/GenBank/DDBJ databases">
        <authorList>
            <person name="Mural R.J."/>
            <person name="Adams M.D."/>
            <person name="Myers E.W."/>
            <person name="Smith H.O."/>
            <person name="Venter J.C."/>
        </authorList>
    </citation>
    <scope>NUCLEOTIDE SEQUENCE [LARGE SCALE GENOMIC DNA]</scope>
</reference>
<reference key="4">
    <citation type="journal article" date="2004" name="Genome Res.">
        <title>The status, quality, and expansion of the NIH full-length cDNA project: the Mammalian Gene Collection (MGC).</title>
        <authorList>
            <consortium name="The MGC Project Team"/>
        </authorList>
    </citation>
    <scope>NUCLEOTIDE SEQUENCE [LARGE SCALE MRNA]</scope>
    <source>
        <strain>Czech II</strain>
        <tissue>Mammary tumor</tissue>
    </source>
</reference>
<reference key="5">
    <citation type="journal article" date="2010" name="Cell">
        <title>A tissue-specific atlas of mouse protein phosphorylation and expression.</title>
        <authorList>
            <person name="Huttlin E.L."/>
            <person name="Jedrychowski M.P."/>
            <person name="Elias J.E."/>
            <person name="Goswami T."/>
            <person name="Rad R."/>
            <person name="Beausoleil S.A."/>
            <person name="Villen J."/>
            <person name="Haas W."/>
            <person name="Sowa M.E."/>
            <person name="Gygi S.P."/>
        </authorList>
    </citation>
    <scope>PHOSPHORYLATION [LARGE SCALE ANALYSIS] AT SER-278</scope>
    <scope>IDENTIFICATION BY MASS SPECTROMETRY [LARGE SCALE ANALYSIS]</scope>
    <source>
        <tissue>Brain</tissue>
        <tissue>Kidney</tissue>
        <tissue>Lung</tissue>
    </source>
</reference>
<dbReference type="EC" id="2.7.11.1"/>
<dbReference type="EMBL" id="AF004934">
    <property type="protein sequence ID" value="AAD01208.1"/>
    <property type="molecule type" value="mRNA"/>
</dbReference>
<dbReference type="EMBL" id="AK148041">
    <property type="protein sequence ID" value="BAE28307.1"/>
    <property type="molecule type" value="mRNA"/>
</dbReference>
<dbReference type="EMBL" id="CH466520">
    <property type="protein sequence ID" value="EDL39941.1"/>
    <property type="molecule type" value="Genomic_DNA"/>
</dbReference>
<dbReference type="EMBL" id="CH466520">
    <property type="protein sequence ID" value="EDL39942.1"/>
    <property type="molecule type" value="Genomic_DNA"/>
</dbReference>
<dbReference type="EMBL" id="BC071218">
    <property type="protein sequence ID" value="AAH71218.1"/>
    <property type="molecule type" value="mRNA"/>
</dbReference>
<dbReference type="CCDS" id="CCDS15192.1"/>
<dbReference type="RefSeq" id="NP_067512.3">
    <property type="nucleotide sequence ID" value="NM_021537.3"/>
</dbReference>
<dbReference type="RefSeq" id="XP_006529831.1">
    <property type="nucleotide sequence ID" value="XM_006529768.3"/>
</dbReference>
<dbReference type="SMR" id="Q9Z2W1"/>
<dbReference type="BioGRID" id="208505">
    <property type="interactions" value="1"/>
</dbReference>
<dbReference type="FunCoup" id="Q9Z2W1">
    <property type="interactions" value="3108"/>
</dbReference>
<dbReference type="IntAct" id="Q9Z2W1">
    <property type="interactions" value="3"/>
</dbReference>
<dbReference type="MINT" id="Q9Z2W1"/>
<dbReference type="STRING" id="10090.ENSMUSP00000027498"/>
<dbReference type="iPTMnet" id="Q9Z2W1"/>
<dbReference type="PhosphoSitePlus" id="Q9Z2W1"/>
<dbReference type="jPOST" id="Q9Z2W1"/>
<dbReference type="PaxDb" id="10090-ENSMUSP00000027498"/>
<dbReference type="PeptideAtlas" id="Q9Z2W1"/>
<dbReference type="ProteomicsDB" id="258756"/>
<dbReference type="Pumba" id="Q9Z2W1"/>
<dbReference type="Antibodypedia" id="34565">
    <property type="antibodies" value="244 antibodies from 33 providers"/>
</dbReference>
<dbReference type="DNASU" id="59041"/>
<dbReference type="Ensembl" id="ENSMUST00000027498.14">
    <property type="protein sequence ID" value="ENSMUSP00000027498.8"/>
    <property type="gene ID" value="ENSMUSG00000026277.15"/>
</dbReference>
<dbReference type="GeneID" id="59041"/>
<dbReference type="KEGG" id="mmu:59041"/>
<dbReference type="UCSC" id="uc007ced.1">
    <property type="organism name" value="mouse"/>
</dbReference>
<dbReference type="AGR" id="MGI:1891699"/>
<dbReference type="CTD" id="10494"/>
<dbReference type="MGI" id="MGI:1891699">
    <property type="gene designation" value="Stk25"/>
</dbReference>
<dbReference type="VEuPathDB" id="HostDB:ENSMUSG00000026277"/>
<dbReference type="eggNOG" id="KOG0201">
    <property type="taxonomic scope" value="Eukaryota"/>
</dbReference>
<dbReference type="GeneTree" id="ENSGT00940000153476"/>
<dbReference type="InParanoid" id="Q9Z2W1"/>
<dbReference type="OMA" id="ACEPIKR"/>
<dbReference type="OrthoDB" id="8693905at2759"/>
<dbReference type="PhylomeDB" id="Q9Z2W1"/>
<dbReference type="TreeFam" id="TF354217"/>
<dbReference type="BioGRID-ORCS" id="59041">
    <property type="hits" value="2 hits in 81 CRISPR screens"/>
</dbReference>
<dbReference type="ChiTaRS" id="Stk25">
    <property type="organism name" value="mouse"/>
</dbReference>
<dbReference type="PRO" id="PR:Q9Z2W1"/>
<dbReference type="Proteomes" id="UP000000589">
    <property type="component" value="Chromosome 1"/>
</dbReference>
<dbReference type="RNAct" id="Q9Z2W1">
    <property type="molecule type" value="protein"/>
</dbReference>
<dbReference type="Bgee" id="ENSMUSG00000026277">
    <property type="expression patterns" value="Expressed in spermatocyte and 251 other cell types or tissues"/>
</dbReference>
<dbReference type="ExpressionAtlas" id="Q9Z2W1">
    <property type="expression patterns" value="baseline and differential"/>
</dbReference>
<dbReference type="GO" id="GO:0090443">
    <property type="term" value="C:FAR/SIN/STRIPAK complex"/>
    <property type="evidence" value="ECO:0000250"/>
    <property type="project" value="UniProtKB"/>
</dbReference>
<dbReference type="GO" id="GO:0005794">
    <property type="term" value="C:Golgi apparatus"/>
    <property type="evidence" value="ECO:0007669"/>
    <property type="project" value="UniProtKB-SubCell"/>
</dbReference>
<dbReference type="GO" id="GO:0005524">
    <property type="term" value="F:ATP binding"/>
    <property type="evidence" value="ECO:0007669"/>
    <property type="project" value="UniProtKB-KW"/>
</dbReference>
<dbReference type="GO" id="GO:0046872">
    <property type="term" value="F:metal ion binding"/>
    <property type="evidence" value="ECO:0007669"/>
    <property type="project" value="UniProtKB-KW"/>
</dbReference>
<dbReference type="GO" id="GO:0042803">
    <property type="term" value="F:protein homodimerization activity"/>
    <property type="evidence" value="ECO:0007669"/>
    <property type="project" value="Ensembl"/>
</dbReference>
<dbReference type="GO" id="GO:0106310">
    <property type="term" value="F:protein serine kinase activity"/>
    <property type="evidence" value="ECO:0007669"/>
    <property type="project" value="RHEA"/>
</dbReference>
<dbReference type="GO" id="GO:0004674">
    <property type="term" value="F:protein serine/threonine kinase activity"/>
    <property type="evidence" value="ECO:0007669"/>
    <property type="project" value="UniProtKB-KW"/>
</dbReference>
<dbReference type="GO" id="GO:0007409">
    <property type="term" value="P:axonogenesis"/>
    <property type="evidence" value="ECO:0000315"/>
    <property type="project" value="MGI"/>
</dbReference>
<dbReference type="GO" id="GO:0051683">
    <property type="term" value="P:establishment of Golgi localization"/>
    <property type="evidence" value="ECO:0007669"/>
    <property type="project" value="Ensembl"/>
</dbReference>
<dbReference type="GO" id="GO:0007163">
    <property type="term" value="P:establishment or maintenance of cell polarity"/>
    <property type="evidence" value="ECO:0000315"/>
    <property type="project" value="MGI"/>
</dbReference>
<dbReference type="GO" id="GO:0051645">
    <property type="term" value="P:Golgi localization"/>
    <property type="evidence" value="ECO:0000315"/>
    <property type="project" value="MGI"/>
</dbReference>
<dbReference type="GO" id="GO:0090168">
    <property type="term" value="P:Golgi reassembly"/>
    <property type="evidence" value="ECO:0007669"/>
    <property type="project" value="Ensembl"/>
</dbReference>
<dbReference type="GO" id="GO:0036481">
    <property type="term" value="P:intrinsic apoptotic signaling pathway in response to hydrogen peroxide"/>
    <property type="evidence" value="ECO:0007669"/>
    <property type="project" value="Ensembl"/>
</dbReference>
<dbReference type="GO" id="GO:0050772">
    <property type="term" value="P:positive regulation of axonogenesis"/>
    <property type="evidence" value="ECO:0000315"/>
    <property type="project" value="MGI"/>
</dbReference>
<dbReference type="GO" id="GO:0032874">
    <property type="term" value="P:positive regulation of stress-activated MAPK cascade"/>
    <property type="evidence" value="ECO:0007669"/>
    <property type="project" value="Ensembl"/>
</dbReference>
<dbReference type="CDD" id="cd06642">
    <property type="entry name" value="STKc_STK25"/>
    <property type="match status" value="1"/>
</dbReference>
<dbReference type="FunFam" id="1.10.510.10:FF:000411">
    <property type="entry name" value="Probable Ste20-like kinase Don3"/>
    <property type="match status" value="1"/>
</dbReference>
<dbReference type="FunFam" id="3.30.200.20:FF:000092">
    <property type="entry name" value="Serine/threonine-protein kinase 24"/>
    <property type="match status" value="1"/>
</dbReference>
<dbReference type="FunFam" id="1.10.12.70:FF:000003">
    <property type="entry name" value="Serine/threonine-protein kinase 25"/>
    <property type="match status" value="1"/>
</dbReference>
<dbReference type="Gene3D" id="1.10.12.70">
    <property type="match status" value="1"/>
</dbReference>
<dbReference type="Gene3D" id="3.30.200.20">
    <property type="entry name" value="Phosphorylase Kinase, domain 1"/>
    <property type="match status" value="1"/>
</dbReference>
<dbReference type="Gene3D" id="1.10.510.10">
    <property type="entry name" value="Transferase(Phosphotransferase) domain 1"/>
    <property type="match status" value="1"/>
</dbReference>
<dbReference type="InterPro" id="IPR011009">
    <property type="entry name" value="Kinase-like_dom_sf"/>
</dbReference>
<dbReference type="InterPro" id="IPR046409">
    <property type="entry name" value="PDC10_dimerisation_sf"/>
</dbReference>
<dbReference type="InterPro" id="IPR048288">
    <property type="entry name" value="PDCD10_N"/>
</dbReference>
<dbReference type="InterPro" id="IPR000719">
    <property type="entry name" value="Prot_kinase_dom"/>
</dbReference>
<dbReference type="InterPro" id="IPR017441">
    <property type="entry name" value="Protein_kinase_ATP_BS"/>
</dbReference>
<dbReference type="InterPro" id="IPR050629">
    <property type="entry name" value="STE20/SPS1-PAK"/>
</dbReference>
<dbReference type="InterPro" id="IPR035060">
    <property type="entry name" value="STK_STK25"/>
</dbReference>
<dbReference type="PANTHER" id="PTHR48012:SF9">
    <property type="entry name" value="SERINE_THREONINE-PROTEIN KINASE 25"/>
    <property type="match status" value="1"/>
</dbReference>
<dbReference type="PANTHER" id="PTHR48012">
    <property type="entry name" value="STERILE20-LIKE KINASE, ISOFORM B-RELATED"/>
    <property type="match status" value="1"/>
</dbReference>
<dbReference type="Pfam" id="PF20929">
    <property type="entry name" value="PDCD10_N"/>
    <property type="match status" value="1"/>
</dbReference>
<dbReference type="Pfam" id="PF00069">
    <property type="entry name" value="Pkinase"/>
    <property type="match status" value="1"/>
</dbReference>
<dbReference type="SMART" id="SM00220">
    <property type="entry name" value="S_TKc"/>
    <property type="match status" value="1"/>
</dbReference>
<dbReference type="SUPFAM" id="SSF56112">
    <property type="entry name" value="Protein kinase-like (PK-like)"/>
    <property type="match status" value="1"/>
</dbReference>
<dbReference type="PROSITE" id="PS00107">
    <property type="entry name" value="PROTEIN_KINASE_ATP"/>
    <property type="match status" value="1"/>
</dbReference>
<dbReference type="PROSITE" id="PS50011">
    <property type="entry name" value="PROTEIN_KINASE_DOM"/>
    <property type="match status" value="1"/>
</dbReference>
<sequence>MAHLRGFAHQHSRVDPEELFTKLDRIGKGSFGEVYKGIDNHTKEVVAIKIIDLEEAEDEIEDIQQEITVLSQCDSPYITRYFGSYLKSTKLWIIMEYLGGGSALDLLKPGPLEETYIATILREILKGLDYLHSERKIHRDIKAANVLLSEQGDVKLADFGVAGQLTDTQIKRNTFVGTPFWMAPEVIKQSAYDFKADIWSLGITAIELAKGEPPNSDLHPMRVLFLIPKNNPPTLEGHHSKPFKEFVEACLNKDPRFRPTAKELLKHKFITRYTKKTSFLTELIDRYKRWKSEGHGEESSSEDSDIDGEAEDGEQGPIWTFPPTIRPSPHSKLHKGTALHSSQKPAEPIKRQPRSQCLSTLVRPVFGELKEKHKQSGGSVGALEELENAFSLAEESCPGISDKLMVHLVERVQRFSHSRNHLTSTR</sequence>